<dbReference type="EMBL" id="CP000249">
    <property type="protein sequence ID" value="ABD12908.1"/>
    <property type="molecule type" value="Genomic_DNA"/>
</dbReference>
<dbReference type="RefSeq" id="WP_011437932.1">
    <property type="nucleotide sequence ID" value="NZ_MSEA01000352.1"/>
</dbReference>
<dbReference type="SMR" id="Q2J734"/>
<dbReference type="STRING" id="106370.Francci3_3556"/>
<dbReference type="KEGG" id="fra:Francci3_3556"/>
<dbReference type="eggNOG" id="COG0184">
    <property type="taxonomic scope" value="Bacteria"/>
</dbReference>
<dbReference type="HOGENOM" id="CLU_148518_0_0_11"/>
<dbReference type="OrthoDB" id="9799262at2"/>
<dbReference type="PhylomeDB" id="Q2J734"/>
<dbReference type="Proteomes" id="UP000001937">
    <property type="component" value="Chromosome"/>
</dbReference>
<dbReference type="GO" id="GO:0022627">
    <property type="term" value="C:cytosolic small ribosomal subunit"/>
    <property type="evidence" value="ECO:0007669"/>
    <property type="project" value="TreeGrafter"/>
</dbReference>
<dbReference type="GO" id="GO:0019843">
    <property type="term" value="F:rRNA binding"/>
    <property type="evidence" value="ECO:0007669"/>
    <property type="project" value="UniProtKB-UniRule"/>
</dbReference>
<dbReference type="GO" id="GO:0003735">
    <property type="term" value="F:structural constituent of ribosome"/>
    <property type="evidence" value="ECO:0007669"/>
    <property type="project" value="InterPro"/>
</dbReference>
<dbReference type="GO" id="GO:0006412">
    <property type="term" value="P:translation"/>
    <property type="evidence" value="ECO:0007669"/>
    <property type="project" value="UniProtKB-UniRule"/>
</dbReference>
<dbReference type="CDD" id="cd00353">
    <property type="entry name" value="Ribosomal_S15p_S13e"/>
    <property type="match status" value="1"/>
</dbReference>
<dbReference type="FunFam" id="1.10.287.10:FF:000002">
    <property type="entry name" value="30S ribosomal protein S15"/>
    <property type="match status" value="1"/>
</dbReference>
<dbReference type="Gene3D" id="6.10.250.3130">
    <property type="match status" value="1"/>
</dbReference>
<dbReference type="Gene3D" id="1.10.287.10">
    <property type="entry name" value="S15/NS1, RNA-binding"/>
    <property type="match status" value="1"/>
</dbReference>
<dbReference type="HAMAP" id="MF_01343_B">
    <property type="entry name" value="Ribosomal_uS15_B"/>
    <property type="match status" value="1"/>
</dbReference>
<dbReference type="InterPro" id="IPR000589">
    <property type="entry name" value="Ribosomal_uS15"/>
</dbReference>
<dbReference type="InterPro" id="IPR005290">
    <property type="entry name" value="Ribosomal_uS15_bac-type"/>
</dbReference>
<dbReference type="InterPro" id="IPR009068">
    <property type="entry name" value="uS15_NS1_RNA-bd_sf"/>
</dbReference>
<dbReference type="NCBIfam" id="TIGR00952">
    <property type="entry name" value="S15_bact"/>
    <property type="match status" value="1"/>
</dbReference>
<dbReference type="PANTHER" id="PTHR23321">
    <property type="entry name" value="RIBOSOMAL PROTEIN S15, BACTERIAL AND ORGANELLAR"/>
    <property type="match status" value="1"/>
</dbReference>
<dbReference type="PANTHER" id="PTHR23321:SF26">
    <property type="entry name" value="SMALL RIBOSOMAL SUBUNIT PROTEIN US15M"/>
    <property type="match status" value="1"/>
</dbReference>
<dbReference type="Pfam" id="PF00312">
    <property type="entry name" value="Ribosomal_S15"/>
    <property type="match status" value="1"/>
</dbReference>
<dbReference type="SMART" id="SM01387">
    <property type="entry name" value="Ribosomal_S15"/>
    <property type="match status" value="1"/>
</dbReference>
<dbReference type="SUPFAM" id="SSF47060">
    <property type="entry name" value="S15/NS1 RNA-binding domain"/>
    <property type="match status" value="1"/>
</dbReference>
<dbReference type="PROSITE" id="PS00362">
    <property type="entry name" value="RIBOSOMAL_S15"/>
    <property type="match status" value="1"/>
</dbReference>
<keyword id="KW-1185">Reference proteome</keyword>
<keyword id="KW-0687">Ribonucleoprotein</keyword>
<keyword id="KW-0689">Ribosomal protein</keyword>
<keyword id="KW-0694">RNA-binding</keyword>
<keyword id="KW-0699">rRNA-binding</keyword>
<evidence type="ECO:0000255" key="1">
    <source>
        <dbReference type="HAMAP-Rule" id="MF_01343"/>
    </source>
</evidence>
<evidence type="ECO:0000305" key="2"/>
<organism>
    <name type="scientific">Frankia casuarinae (strain DSM 45818 / CECT 9043 / HFP020203 / CcI3)</name>
    <dbReference type="NCBI Taxonomy" id="106370"/>
    <lineage>
        <taxon>Bacteria</taxon>
        <taxon>Bacillati</taxon>
        <taxon>Actinomycetota</taxon>
        <taxon>Actinomycetes</taxon>
        <taxon>Frankiales</taxon>
        <taxon>Frankiaceae</taxon>
        <taxon>Frankia</taxon>
    </lineage>
</organism>
<proteinExistence type="inferred from homology"/>
<sequence length="89" mass="10456">MPLASDVKQKIMSDYATVERDTGSPEVQVAMLTRRISDLTEHLKVHKHDHHSRRGLLLLVGRRRRLLNYLAKTDINRYRALIERLGLRR</sequence>
<protein>
    <recommendedName>
        <fullName evidence="1">Small ribosomal subunit protein uS15</fullName>
    </recommendedName>
    <alternativeName>
        <fullName evidence="2">30S ribosomal protein S15</fullName>
    </alternativeName>
</protein>
<feature type="chain" id="PRO_0000255496" description="Small ribosomal subunit protein uS15">
    <location>
        <begin position="1"/>
        <end position="89"/>
    </location>
</feature>
<name>RS15_FRACC</name>
<gene>
    <name evidence="1" type="primary">rpsO</name>
    <name type="ordered locus">Francci3_3556</name>
</gene>
<accession>Q2J734</accession>
<reference key="1">
    <citation type="journal article" date="2007" name="Genome Res.">
        <title>Genome characteristics of facultatively symbiotic Frankia sp. strains reflect host range and host plant biogeography.</title>
        <authorList>
            <person name="Normand P."/>
            <person name="Lapierre P."/>
            <person name="Tisa L.S."/>
            <person name="Gogarten J.P."/>
            <person name="Alloisio N."/>
            <person name="Bagnarol E."/>
            <person name="Bassi C.A."/>
            <person name="Berry A.M."/>
            <person name="Bickhart D.M."/>
            <person name="Choisne N."/>
            <person name="Couloux A."/>
            <person name="Cournoyer B."/>
            <person name="Cruveiller S."/>
            <person name="Daubin V."/>
            <person name="Demange N."/>
            <person name="Francino M.P."/>
            <person name="Goltsman E."/>
            <person name="Huang Y."/>
            <person name="Kopp O.R."/>
            <person name="Labarre L."/>
            <person name="Lapidus A."/>
            <person name="Lavire C."/>
            <person name="Marechal J."/>
            <person name="Martinez M."/>
            <person name="Mastronunzio J.E."/>
            <person name="Mullin B.C."/>
            <person name="Niemann J."/>
            <person name="Pujic P."/>
            <person name="Rawnsley T."/>
            <person name="Rouy Z."/>
            <person name="Schenowitz C."/>
            <person name="Sellstedt A."/>
            <person name="Tavares F."/>
            <person name="Tomkins J.P."/>
            <person name="Vallenet D."/>
            <person name="Valverde C."/>
            <person name="Wall L.G."/>
            <person name="Wang Y."/>
            <person name="Medigue C."/>
            <person name="Benson D.R."/>
        </authorList>
    </citation>
    <scope>NUCLEOTIDE SEQUENCE [LARGE SCALE GENOMIC DNA]</scope>
    <source>
        <strain>DSM 45818 / CECT 9043 / HFP020203 / CcI3</strain>
    </source>
</reference>
<comment type="function">
    <text evidence="1">One of the primary rRNA binding proteins, it binds directly to 16S rRNA where it helps nucleate assembly of the platform of the 30S subunit by binding and bridging several RNA helices of the 16S rRNA.</text>
</comment>
<comment type="function">
    <text evidence="1">Forms an intersubunit bridge (bridge B4) with the 23S rRNA of the 50S subunit in the ribosome.</text>
</comment>
<comment type="subunit">
    <text evidence="1">Part of the 30S ribosomal subunit. Forms a bridge to the 50S subunit in the 70S ribosome, contacting the 23S rRNA.</text>
</comment>
<comment type="similarity">
    <text evidence="1">Belongs to the universal ribosomal protein uS15 family.</text>
</comment>